<accession>P34301</accession>
<dbReference type="EMBL" id="FO080280">
    <property type="protein sequence ID" value="CCD62566.1"/>
    <property type="molecule type" value="Genomic_DNA"/>
</dbReference>
<dbReference type="PIR" id="D88533">
    <property type="entry name" value="D88533"/>
</dbReference>
<dbReference type="RefSeq" id="NP_498890.1">
    <property type="nucleotide sequence ID" value="NM_066489.3"/>
</dbReference>
<dbReference type="FunCoup" id="P34301">
    <property type="interactions" value="60"/>
</dbReference>
<dbReference type="STRING" id="6239.C06E1.6.1"/>
<dbReference type="PaxDb" id="6239-C06E1.6"/>
<dbReference type="EnsemblMetazoa" id="C06E1.6.1">
    <property type="protein sequence ID" value="C06E1.6.1"/>
    <property type="gene ID" value="WBGene00015521"/>
</dbReference>
<dbReference type="GeneID" id="182315"/>
<dbReference type="KEGG" id="cel:CELE_C06E1.6"/>
<dbReference type="AGR" id="WB:WBGene00015521"/>
<dbReference type="CTD" id="182315"/>
<dbReference type="WormBase" id="C06E1.6">
    <property type="protein sequence ID" value="CE00061"/>
    <property type="gene ID" value="WBGene00015521"/>
    <property type="gene designation" value="fipr-16"/>
</dbReference>
<dbReference type="GeneTree" id="ENSGT00970000197232"/>
<dbReference type="HOGENOM" id="CLU_3175886_0_0_1"/>
<dbReference type="InParanoid" id="P34301"/>
<dbReference type="PRO" id="PR:P34301"/>
<dbReference type="Proteomes" id="UP000001940">
    <property type="component" value="Chromosome III"/>
</dbReference>
<dbReference type="Bgee" id="WBGene00015521">
    <property type="expression patterns" value="Expressed in pharyngeal muscle cell (C elegans) and 1 other cell type or tissue"/>
</dbReference>
<dbReference type="InterPro" id="IPR052889">
    <property type="entry name" value="Celegans_Fungus-Induced_Rsp"/>
</dbReference>
<dbReference type="InterPro" id="IPR024415">
    <property type="entry name" value="Fungus-induced"/>
</dbReference>
<dbReference type="PANTHER" id="PTHR39380:SF1">
    <property type="entry name" value="FIP (FUNGUS-INDUCED PROTEIN) RELATED-RELATED"/>
    <property type="match status" value="1"/>
</dbReference>
<dbReference type="PANTHER" id="PTHR39380">
    <property type="entry name" value="FIP (FUNGUS-INDUCED PROTEIN) RELATED-RELATED-RELATED"/>
    <property type="match status" value="1"/>
</dbReference>
<dbReference type="Pfam" id="PF10917">
    <property type="entry name" value="Fungus-induced"/>
    <property type="match status" value="1"/>
</dbReference>
<protein>
    <recommendedName>
        <fullName>Fungus-induced-related protein 16</fullName>
    </recommendedName>
</protein>
<proteinExistence type="predicted"/>
<sequence length="49" mass="4970">MIVYSVFIFAVLAISSVTGIFLPGGGGKKCGGHGEYGSGVIIGAERPKK</sequence>
<feature type="chain" id="PRO_0000065158" description="Fungus-induced-related protein 16">
    <location>
        <begin position="1"/>
        <end position="49"/>
    </location>
</feature>
<gene>
    <name type="primary">fipr-16</name>
    <name type="ORF">C06E1.6</name>
</gene>
<keyword id="KW-1185">Reference proteome</keyword>
<organism>
    <name type="scientific">Caenorhabditis elegans</name>
    <dbReference type="NCBI Taxonomy" id="6239"/>
    <lineage>
        <taxon>Eukaryota</taxon>
        <taxon>Metazoa</taxon>
        <taxon>Ecdysozoa</taxon>
        <taxon>Nematoda</taxon>
        <taxon>Chromadorea</taxon>
        <taxon>Rhabditida</taxon>
        <taxon>Rhabditina</taxon>
        <taxon>Rhabditomorpha</taxon>
        <taxon>Rhabditoidea</taxon>
        <taxon>Rhabditidae</taxon>
        <taxon>Peloderinae</taxon>
        <taxon>Caenorhabditis</taxon>
    </lineage>
</organism>
<reference key="1">
    <citation type="journal article" date="1994" name="Nature">
        <title>2.2 Mb of contiguous nucleotide sequence from chromosome III of C. elegans.</title>
        <authorList>
            <person name="Wilson R."/>
            <person name="Ainscough R."/>
            <person name="Anderson K."/>
            <person name="Baynes C."/>
            <person name="Berks M."/>
            <person name="Bonfield J."/>
            <person name="Burton J."/>
            <person name="Connell M."/>
            <person name="Copsey T."/>
            <person name="Cooper J."/>
            <person name="Coulson A."/>
            <person name="Craxton M."/>
            <person name="Dear S."/>
            <person name="Du Z."/>
            <person name="Durbin R."/>
            <person name="Favello A."/>
            <person name="Fraser A."/>
            <person name="Fulton L."/>
            <person name="Gardner A."/>
            <person name="Green P."/>
            <person name="Hawkins T."/>
            <person name="Hillier L."/>
            <person name="Jier M."/>
            <person name="Johnston L."/>
            <person name="Jones M."/>
            <person name="Kershaw J."/>
            <person name="Kirsten J."/>
            <person name="Laisster N."/>
            <person name="Latreille P."/>
            <person name="Lightning J."/>
            <person name="Lloyd C."/>
            <person name="Mortimore B."/>
            <person name="O'Callaghan M."/>
            <person name="Parsons J."/>
            <person name="Percy C."/>
            <person name="Rifken L."/>
            <person name="Roopra A."/>
            <person name="Saunders D."/>
            <person name="Shownkeen R."/>
            <person name="Sims M."/>
            <person name="Smaldon N."/>
            <person name="Smith A."/>
            <person name="Smith M."/>
            <person name="Sonnhammer E."/>
            <person name="Staden R."/>
            <person name="Sulston J."/>
            <person name="Thierry-Mieg J."/>
            <person name="Thomas K."/>
            <person name="Vaudin M."/>
            <person name="Vaughan K."/>
            <person name="Waterston R."/>
            <person name="Watson A."/>
            <person name="Weinstock L."/>
            <person name="Wilkinson-Sproat J."/>
            <person name="Wohldman P."/>
        </authorList>
    </citation>
    <scope>NUCLEOTIDE SEQUENCE [LARGE SCALE GENOMIC DNA]</scope>
    <source>
        <strain>Bristol N2</strain>
    </source>
</reference>
<reference key="2">
    <citation type="journal article" date="1998" name="Science">
        <title>Genome sequence of the nematode C. elegans: a platform for investigating biology.</title>
        <authorList>
            <consortium name="The C. elegans sequencing consortium"/>
        </authorList>
    </citation>
    <scope>NUCLEOTIDE SEQUENCE [LARGE SCALE GENOMIC DNA]</scope>
    <source>
        <strain>Bristol N2</strain>
    </source>
</reference>
<name>FIR16_CAEEL</name>